<sequence length="253" mass="27656">MQKLIMGNWKMNGNSTSIKELCSGISQVQYDTSRVAIAVFPSSVYVKEVISQLPEKVGVGLQNITFYDDGAYTGEISARMLEDIGCDYLLIGHSERRSLFAESDEDVFKKLNKIIDTTITPVVCIGESLDDRKSGKLKQVLATQLSLILENLSVEQLAKVVIAYEPVWAIGTGVVASLEQIQETHQFIRSLLAKVDERLAKNIKIVYGGSLKAENAKDILSLPDVDGGLIGGASLKAAEFNEIINQANKICTE</sequence>
<keyword id="KW-0963">Cytoplasm</keyword>
<keyword id="KW-0312">Gluconeogenesis</keyword>
<keyword id="KW-0324">Glycolysis</keyword>
<keyword id="KW-0413">Isomerase</keyword>
<accession>A7NEF8</accession>
<name>TPIS_FRATF</name>
<comment type="function">
    <text evidence="1">Involved in the gluconeogenesis. Catalyzes stereospecifically the conversion of dihydroxyacetone phosphate (DHAP) to D-glyceraldehyde-3-phosphate (G3P).</text>
</comment>
<comment type="catalytic activity">
    <reaction evidence="1">
        <text>D-glyceraldehyde 3-phosphate = dihydroxyacetone phosphate</text>
        <dbReference type="Rhea" id="RHEA:18585"/>
        <dbReference type="ChEBI" id="CHEBI:57642"/>
        <dbReference type="ChEBI" id="CHEBI:59776"/>
        <dbReference type="EC" id="5.3.1.1"/>
    </reaction>
</comment>
<comment type="pathway">
    <text evidence="1">Carbohydrate biosynthesis; gluconeogenesis.</text>
</comment>
<comment type="pathway">
    <text evidence="1">Carbohydrate degradation; glycolysis; D-glyceraldehyde 3-phosphate from glycerone phosphate: step 1/1.</text>
</comment>
<comment type="subunit">
    <text evidence="1">Homodimer.</text>
</comment>
<comment type="subcellular location">
    <subcellularLocation>
        <location evidence="1">Cytoplasm</location>
    </subcellularLocation>
</comment>
<comment type="similarity">
    <text evidence="1">Belongs to the triosephosphate isomerase family.</text>
</comment>
<evidence type="ECO:0000255" key="1">
    <source>
        <dbReference type="HAMAP-Rule" id="MF_00147"/>
    </source>
</evidence>
<protein>
    <recommendedName>
        <fullName evidence="1">Triosephosphate isomerase</fullName>
        <shortName evidence="1">TIM</shortName>
        <shortName evidence="1">TPI</shortName>
        <ecNumber evidence="1">5.3.1.1</ecNumber>
    </recommendedName>
    <alternativeName>
        <fullName evidence="1">Triose-phosphate isomerase</fullName>
    </alternativeName>
</protein>
<dbReference type="EC" id="5.3.1.1" evidence="1"/>
<dbReference type="EMBL" id="CP000803">
    <property type="protein sequence ID" value="ABU62361.2"/>
    <property type="molecule type" value="Genomic_DNA"/>
</dbReference>
<dbReference type="RefSeq" id="WP_003017307.1">
    <property type="nucleotide sequence ID" value="NC_009749.1"/>
</dbReference>
<dbReference type="SMR" id="A7NEF8"/>
<dbReference type="KEGG" id="fta:FTA_1886"/>
<dbReference type="HOGENOM" id="CLU_024251_2_1_6"/>
<dbReference type="UniPathway" id="UPA00109">
    <property type="reaction ID" value="UER00189"/>
</dbReference>
<dbReference type="UniPathway" id="UPA00138"/>
<dbReference type="GO" id="GO:0005829">
    <property type="term" value="C:cytosol"/>
    <property type="evidence" value="ECO:0007669"/>
    <property type="project" value="TreeGrafter"/>
</dbReference>
<dbReference type="GO" id="GO:0004807">
    <property type="term" value="F:triose-phosphate isomerase activity"/>
    <property type="evidence" value="ECO:0007669"/>
    <property type="project" value="UniProtKB-UniRule"/>
</dbReference>
<dbReference type="GO" id="GO:0006094">
    <property type="term" value="P:gluconeogenesis"/>
    <property type="evidence" value="ECO:0007669"/>
    <property type="project" value="UniProtKB-UniRule"/>
</dbReference>
<dbReference type="GO" id="GO:0046166">
    <property type="term" value="P:glyceraldehyde-3-phosphate biosynthetic process"/>
    <property type="evidence" value="ECO:0007669"/>
    <property type="project" value="TreeGrafter"/>
</dbReference>
<dbReference type="GO" id="GO:0019563">
    <property type="term" value="P:glycerol catabolic process"/>
    <property type="evidence" value="ECO:0007669"/>
    <property type="project" value="TreeGrafter"/>
</dbReference>
<dbReference type="GO" id="GO:0006096">
    <property type="term" value="P:glycolytic process"/>
    <property type="evidence" value="ECO:0007669"/>
    <property type="project" value="UniProtKB-UniRule"/>
</dbReference>
<dbReference type="CDD" id="cd00311">
    <property type="entry name" value="TIM"/>
    <property type="match status" value="1"/>
</dbReference>
<dbReference type="FunFam" id="3.20.20.70:FF:000016">
    <property type="entry name" value="Triosephosphate isomerase"/>
    <property type="match status" value="1"/>
</dbReference>
<dbReference type="Gene3D" id="3.20.20.70">
    <property type="entry name" value="Aldolase class I"/>
    <property type="match status" value="1"/>
</dbReference>
<dbReference type="HAMAP" id="MF_00147_B">
    <property type="entry name" value="TIM_B"/>
    <property type="match status" value="1"/>
</dbReference>
<dbReference type="InterPro" id="IPR013785">
    <property type="entry name" value="Aldolase_TIM"/>
</dbReference>
<dbReference type="InterPro" id="IPR035990">
    <property type="entry name" value="TIM_sf"/>
</dbReference>
<dbReference type="InterPro" id="IPR022896">
    <property type="entry name" value="TrioseP_Isoase_bac/euk"/>
</dbReference>
<dbReference type="InterPro" id="IPR000652">
    <property type="entry name" value="Triosephosphate_isomerase"/>
</dbReference>
<dbReference type="InterPro" id="IPR020861">
    <property type="entry name" value="Triosephosphate_isomerase_AS"/>
</dbReference>
<dbReference type="NCBIfam" id="TIGR00419">
    <property type="entry name" value="tim"/>
    <property type="match status" value="1"/>
</dbReference>
<dbReference type="PANTHER" id="PTHR21139">
    <property type="entry name" value="TRIOSEPHOSPHATE ISOMERASE"/>
    <property type="match status" value="1"/>
</dbReference>
<dbReference type="PANTHER" id="PTHR21139:SF42">
    <property type="entry name" value="TRIOSEPHOSPHATE ISOMERASE"/>
    <property type="match status" value="1"/>
</dbReference>
<dbReference type="Pfam" id="PF00121">
    <property type="entry name" value="TIM"/>
    <property type="match status" value="1"/>
</dbReference>
<dbReference type="SUPFAM" id="SSF51351">
    <property type="entry name" value="Triosephosphate isomerase (TIM)"/>
    <property type="match status" value="1"/>
</dbReference>
<dbReference type="PROSITE" id="PS00171">
    <property type="entry name" value="TIM_1"/>
    <property type="match status" value="1"/>
</dbReference>
<dbReference type="PROSITE" id="PS51440">
    <property type="entry name" value="TIM_2"/>
    <property type="match status" value="1"/>
</dbReference>
<proteinExistence type="inferred from homology"/>
<feature type="chain" id="PRO_1000076647" description="Triosephosphate isomerase">
    <location>
        <begin position="1"/>
        <end position="253"/>
    </location>
</feature>
<feature type="active site" description="Electrophile" evidence="1">
    <location>
        <position position="93"/>
    </location>
</feature>
<feature type="active site" description="Proton acceptor" evidence="1">
    <location>
        <position position="165"/>
    </location>
</feature>
<feature type="binding site" evidence="1">
    <location>
        <begin position="8"/>
        <end position="10"/>
    </location>
    <ligand>
        <name>substrate</name>
    </ligand>
</feature>
<feature type="binding site" evidence="1">
    <location>
        <position position="171"/>
    </location>
    <ligand>
        <name>substrate</name>
    </ligand>
</feature>
<feature type="binding site" evidence="1">
    <location>
        <position position="210"/>
    </location>
    <ligand>
        <name>substrate</name>
    </ligand>
</feature>
<feature type="binding site" evidence="1">
    <location>
        <begin position="231"/>
        <end position="232"/>
    </location>
    <ligand>
        <name>substrate</name>
    </ligand>
</feature>
<gene>
    <name evidence="1" type="primary">tpiA</name>
    <name type="ordered locus">FTA_1886</name>
</gene>
<organism>
    <name type="scientific">Francisella tularensis subsp. holarctica (strain FTNF002-00 / FTA)</name>
    <dbReference type="NCBI Taxonomy" id="458234"/>
    <lineage>
        <taxon>Bacteria</taxon>
        <taxon>Pseudomonadati</taxon>
        <taxon>Pseudomonadota</taxon>
        <taxon>Gammaproteobacteria</taxon>
        <taxon>Thiotrichales</taxon>
        <taxon>Francisellaceae</taxon>
        <taxon>Francisella</taxon>
    </lineage>
</organism>
<reference key="1">
    <citation type="journal article" date="2009" name="PLoS ONE">
        <title>Complete genome sequence of Francisella tularensis subspecies holarctica FTNF002-00.</title>
        <authorList>
            <person name="Barabote R.D."/>
            <person name="Xie G."/>
            <person name="Brettin T.S."/>
            <person name="Hinrichs S.H."/>
            <person name="Fey P.D."/>
            <person name="Jay J.J."/>
            <person name="Engle J.L."/>
            <person name="Godbole S.D."/>
            <person name="Noronha J.M."/>
            <person name="Scheuermann R.H."/>
            <person name="Zhou L.W."/>
            <person name="Lion C."/>
            <person name="Dempsey M.P."/>
        </authorList>
    </citation>
    <scope>NUCLEOTIDE SEQUENCE [LARGE SCALE GENOMIC DNA]</scope>
    <source>
        <strain>FTNF002-00 / FTA</strain>
    </source>
</reference>